<reference key="1">
    <citation type="journal article" date="2003" name="Nucleic Acids Res.">
        <title>Complete chloroplast DNA sequence of the moss Physcomitrella patens: evidence for the loss and relocation of rpoA from the chloroplast to the nucleus.</title>
        <authorList>
            <person name="Sugiura C."/>
            <person name="Kobayashi Y."/>
            <person name="Setsuyuki A."/>
            <person name="Sugita C."/>
            <person name="Sugita M."/>
        </authorList>
    </citation>
    <scope>NUCLEOTIDE SEQUENCE [LARGE SCALE GENOMIC DNA]</scope>
    <source>
        <strain>cv. Gransden 2004</strain>
    </source>
</reference>
<keyword id="KW-0150">Chloroplast</keyword>
<keyword id="KW-0934">Plastid</keyword>
<keyword id="KW-1185">Reference proteome</keyword>
<keyword id="KW-0687">Ribonucleoprotein</keyword>
<keyword id="KW-0689">Ribosomal protein</keyword>
<keyword id="KW-0694">RNA-binding</keyword>
<keyword id="KW-0699">rRNA-binding</keyword>
<geneLocation type="chloroplast"/>
<accession>Q6YXS0</accession>
<dbReference type="EMBL" id="AP005672">
    <property type="protein sequence ID" value="BAC85014.1"/>
    <property type="molecule type" value="Genomic_DNA"/>
</dbReference>
<dbReference type="RefSeq" id="NP_904165.1">
    <property type="nucleotide sequence ID" value="NC_005087.2"/>
</dbReference>
<dbReference type="RefSeq" id="YP_009477496.1">
    <property type="nucleotide sequence ID" value="NC_037465.1"/>
</dbReference>
<dbReference type="SMR" id="Q6YXS0"/>
<dbReference type="FunCoup" id="Q6YXS0">
    <property type="interactions" value="2265"/>
</dbReference>
<dbReference type="STRING" id="3218.Q6YXS0"/>
<dbReference type="GeneID" id="2546745"/>
<dbReference type="GeneID" id="36487226"/>
<dbReference type="KEGG" id="ppp:2546745"/>
<dbReference type="InParanoid" id="Q6YXS0"/>
<dbReference type="OrthoDB" id="35139at2759"/>
<dbReference type="Proteomes" id="UP000006727">
    <property type="component" value="Chloroplast"/>
</dbReference>
<dbReference type="GO" id="GO:0009507">
    <property type="term" value="C:chloroplast"/>
    <property type="evidence" value="ECO:0007669"/>
    <property type="project" value="UniProtKB-SubCell"/>
</dbReference>
<dbReference type="GO" id="GO:0005840">
    <property type="term" value="C:ribosome"/>
    <property type="evidence" value="ECO:0000318"/>
    <property type="project" value="GO_Central"/>
</dbReference>
<dbReference type="GO" id="GO:0015935">
    <property type="term" value="C:small ribosomal subunit"/>
    <property type="evidence" value="ECO:0007669"/>
    <property type="project" value="InterPro"/>
</dbReference>
<dbReference type="GO" id="GO:0003729">
    <property type="term" value="F:mRNA binding"/>
    <property type="evidence" value="ECO:0000318"/>
    <property type="project" value="GO_Central"/>
</dbReference>
<dbReference type="GO" id="GO:0019843">
    <property type="term" value="F:rRNA binding"/>
    <property type="evidence" value="ECO:0000318"/>
    <property type="project" value="GO_Central"/>
</dbReference>
<dbReference type="GO" id="GO:0003735">
    <property type="term" value="F:structural constituent of ribosome"/>
    <property type="evidence" value="ECO:0000318"/>
    <property type="project" value="GO_Central"/>
</dbReference>
<dbReference type="GO" id="GO:0000028">
    <property type="term" value="P:ribosomal small subunit assembly"/>
    <property type="evidence" value="ECO:0000318"/>
    <property type="project" value="GO_Central"/>
</dbReference>
<dbReference type="GO" id="GO:0006412">
    <property type="term" value="P:translation"/>
    <property type="evidence" value="ECO:0000318"/>
    <property type="project" value="GO_Central"/>
</dbReference>
<dbReference type="CDD" id="cd14871">
    <property type="entry name" value="uS7_Chloroplast"/>
    <property type="match status" value="1"/>
</dbReference>
<dbReference type="FunFam" id="1.10.455.10:FF:000001">
    <property type="entry name" value="30S ribosomal protein S7"/>
    <property type="match status" value="1"/>
</dbReference>
<dbReference type="Gene3D" id="1.10.455.10">
    <property type="entry name" value="Ribosomal protein S7 domain"/>
    <property type="match status" value="1"/>
</dbReference>
<dbReference type="HAMAP" id="MF_00480_B">
    <property type="entry name" value="Ribosomal_uS7_B"/>
    <property type="match status" value="1"/>
</dbReference>
<dbReference type="InterPro" id="IPR000235">
    <property type="entry name" value="Ribosomal_uS7"/>
</dbReference>
<dbReference type="InterPro" id="IPR005717">
    <property type="entry name" value="Ribosomal_uS7_bac/org-type"/>
</dbReference>
<dbReference type="InterPro" id="IPR020606">
    <property type="entry name" value="Ribosomal_uS7_CS"/>
</dbReference>
<dbReference type="InterPro" id="IPR023798">
    <property type="entry name" value="Ribosomal_uS7_dom"/>
</dbReference>
<dbReference type="InterPro" id="IPR036823">
    <property type="entry name" value="Ribosomal_uS7_dom_sf"/>
</dbReference>
<dbReference type="NCBIfam" id="TIGR01029">
    <property type="entry name" value="rpsG_bact"/>
    <property type="match status" value="1"/>
</dbReference>
<dbReference type="PANTHER" id="PTHR11205">
    <property type="entry name" value="RIBOSOMAL PROTEIN S7"/>
    <property type="match status" value="1"/>
</dbReference>
<dbReference type="Pfam" id="PF00177">
    <property type="entry name" value="Ribosomal_S7"/>
    <property type="match status" value="1"/>
</dbReference>
<dbReference type="PIRSF" id="PIRSF002122">
    <property type="entry name" value="RPS7p_RPS7a_RPS5e_RPS7o"/>
    <property type="match status" value="1"/>
</dbReference>
<dbReference type="SUPFAM" id="SSF47973">
    <property type="entry name" value="Ribosomal protein S7"/>
    <property type="match status" value="1"/>
</dbReference>
<dbReference type="PROSITE" id="PS00052">
    <property type="entry name" value="RIBOSOMAL_S7"/>
    <property type="match status" value="1"/>
</dbReference>
<evidence type="ECO:0000250" key="1"/>
<evidence type="ECO:0000305" key="2"/>
<organism>
    <name type="scientific">Physcomitrium patens</name>
    <name type="common">Spreading-leaved earth moss</name>
    <name type="synonym">Physcomitrella patens</name>
    <dbReference type="NCBI Taxonomy" id="3218"/>
    <lineage>
        <taxon>Eukaryota</taxon>
        <taxon>Viridiplantae</taxon>
        <taxon>Streptophyta</taxon>
        <taxon>Embryophyta</taxon>
        <taxon>Bryophyta</taxon>
        <taxon>Bryophytina</taxon>
        <taxon>Bryopsida</taxon>
        <taxon>Funariidae</taxon>
        <taxon>Funariales</taxon>
        <taxon>Funariaceae</taxon>
        <taxon>Physcomitrium</taxon>
    </lineage>
</organism>
<gene>
    <name type="primary">rps7</name>
</gene>
<comment type="function">
    <text evidence="1">One of the primary rRNA binding proteins, it binds directly to 16S rRNA where it nucleates assembly of the head domain of the 30S subunit.</text>
</comment>
<comment type="subunit">
    <text>Part of the 30S ribosomal subunit.</text>
</comment>
<comment type="subcellular location">
    <subcellularLocation>
        <location>Plastid</location>
        <location>Chloroplast</location>
    </subcellularLocation>
</comment>
<comment type="similarity">
    <text evidence="2">Belongs to the universal ribosomal protein uS7 family.</text>
</comment>
<sequence length="155" mass="17942">MSRRSIIEKKTIKSDPIYRNRLVNMMVNRILKNGKKSLAYRIFYKAMKNIKQKTKKNPLSILRQAIHRVTPNVTIKARRVGGSTYQVPVEIKSAQGKALAICWLLRASKKRLGRNMAFKLSYELIDAARDSGEAIRKKEETHRMAEANRAFAHFR</sequence>
<protein>
    <recommendedName>
        <fullName evidence="2">Small ribosomal subunit protein uS7c</fullName>
    </recommendedName>
    <alternativeName>
        <fullName>30S ribosomal protein S7, chloroplastic</fullName>
    </alternativeName>
</protein>
<proteinExistence type="inferred from homology"/>
<feature type="chain" id="PRO_0000124489" description="Small ribosomal subunit protein uS7c">
    <location>
        <begin position="1"/>
        <end position="155"/>
    </location>
</feature>
<name>RR7_PHYPA</name>